<accession>Q1R2G9</accession>
<sequence>MTKSISLSKRIFVIVILFVIVAVCTFFVQSCARKSNHAASFQNYHATIDGKEIAGITNNISSLTWSAQSNTLFSTINKPAAIVEMTTNGDLIRTIPLDFVKDLETIEYIGDNQFVISDERDYAIYVISLTPNSEVKILKKIKIPLQESPTNCGFEGLAYSRQDHTFWFFKEKNPIEVYKVNGLLSSNELHISKDKALQRQFTLDDVSGAEFNQQKNTLLVLSHESRALQEVTLVGEVIGGMSLTKGSRGLSHNIKQAEGVAMDASGNIYIVSEPNRFYRFTPQSSH</sequence>
<gene>
    <name type="primary">yjiK</name>
    <name type="ordered locus">UTI89_C5042</name>
</gene>
<evidence type="ECO:0000255" key="1"/>
<evidence type="ECO:0000255" key="2">
    <source>
        <dbReference type="PROSITE-ProRule" id="PRU00303"/>
    </source>
</evidence>
<evidence type="ECO:0000305" key="3"/>
<name>YJIK_ECOUT</name>
<proteinExistence type="inferred from homology"/>
<organism>
    <name type="scientific">Escherichia coli (strain UTI89 / UPEC)</name>
    <dbReference type="NCBI Taxonomy" id="364106"/>
    <lineage>
        <taxon>Bacteria</taxon>
        <taxon>Pseudomonadati</taxon>
        <taxon>Pseudomonadota</taxon>
        <taxon>Gammaproteobacteria</taxon>
        <taxon>Enterobacterales</taxon>
        <taxon>Enterobacteriaceae</taxon>
        <taxon>Escherichia</taxon>
    </lineage>
</organism>
<feature type="chain" id="PRO_0000294106" description="Uncharacterized protein YjiK">
    <location>
        <begin position="1"/>
        <end position="286"/>
    </location>
</feature>
<feature type="transmembrane region" description="Helical" evidence="1">
    <location>
        <begin position="11"/>
        <end position="31"/>
    </location>
</feature>
<comment type="subcellular location">
    <subcellularLocation>
        <location evidence="2">Cell membrane</location>
        <topology evidence="3">Single-pass membrane protein</topology>
    </subcellularLocation>
</comment>
<comment type="similarity">
    <text evidence="3">Belongs to the YjiK family.</text>
</comment>
<comment type="sequence caution" evidence="3">
    <conflict type="erroneous initiation">
        <sequence resource="EMBL-CDS" id="ABE10445"/>
    </conflict>
</comment>
<reference key="1">
    <citation type="journal article" date="2006" name="Proc. Natl. Acad. Sci. U.S.A.">
        <title>Identification of genes subject to positive selection in uropathogenic strains of Escherichia coli: a comparative genomics approach.</title>
        <authorList>
            <person name="Chen S.L."/>
            <person name="Hung C.-S."/>
            <person name="Xu J."/>
            <person name="Reigstad C.S."/>
            <person name="Magrini V."/>
            <person name="Sabo A."/>
            <person name="Blasiar D."/>
            <person name="Bieri T."/>
            <person name="Meyer R.R."/>
            <person name="Ozersky P."/>
            <person name="Armstrong J.R."/>
            <person name="Fulton R.S."/>
            <person name="Latreille J.P."/>
            <person name="Spieth J."/>
            <person name="Hooton T.M."/>
            <person name="Mardis E.R."/>
            <person name="Hultgren S.J."/>
            <person name="Gordon J.I."/>
        </authorList>
    </citation>
    <scope>NUCLEOTIDE SEQUENCE [LARGE SCALE GENOMIC DNA]</scope>
    <source>
        <strain>UTI89 / UPEC</strain>
    </source>
</reference>
<keyword id="KW-1003">Cell membrane</keyword>
<keyword id="KW-0472">Membrane</keyword>
<keyword id="KW-0812">Transmembrane</keyword>
<keyword id="KW-1133">Transmembrane helix</keyword>
<dbReference type="EMBL" id="CP000243">
    <property type="protein sequence ID" value="ABE10445.1"/>
    <property type="status" value="ALT_INIT"/>
    <property type="molecule type" value="Genomic_DNA"/>
</dbReference>
<dbReference type="RefSeq" id="WP_024250948.1">
    <property type="nucleotide sequence ID" value="NZ_CP064825.1"/>
</dbReference>
<dbReference type="SMR" id="Q1R2G9"/>
<dbReference type="KEGG" id="eci:UTI89_C5042"/>
<dbReference type="HOGENOM" id="CLU_055438_1_0_6"/>
<dbReference type="Proteomes" id="UP000001952">
    <property type="component" value="Chromosome"/>
</dbReference>
<dbReference type="GO" id="GO:0005886">
    <property type="term" value="C:plasma membrane"/>
    <property type="evidence" value="ECO:0007669"/>
    <property type="project" value="UniProtKB-SubCell"/>
</dbReference>
<dbReference type="CDD" id="cd09971">
    <property type="entry name" value="SdiA-regulated"/>
    <property type="match status" value="1"/>
</dbReference>
<dbReference type="Gene3D" id="2.120.10.30">
    <property type="entry name" value="TolB, C-terminal domain"/>
    <property type="match status" value="1"/>
</dbReference>
<dbReference type="InterPro" id="IPR011042">
    <property type="entry name" value="6-blade_b-propeller_TolB-like"/>
</dbReference>
<dbReference type="InterPro" id="IPR009722">
    <property type="entry name" value="YjiK/CarP"/>
</dbReference>
<dbReference type="Pfam" id="PF06977">
    <property type="entry name" value="SdiA-regulated"/>
    <property type="match status" value="1"/>
</dbReference>
<dbReference type="SUPFAM" id="SSF50956">
    <property type="entry name" value="Thermostable phytase (3-phytase)"/>
    <property type="match status" value="1"/>
</dbReference>
<dbReference type="PROSITE" id="PS51257">
    <property type="entry name" value="PROKAR_LIPOPROTEIN"/>
    <property type="match status" value="1"/>
</dbReference>
<protein>
    <recommendedName>
        <fullName>Uncharacterized protein YjiK</fullName>
    </recommendedName>
</protein>